<name>KLH10_MOUSE</name>
<evidence type="ECO:0000250" key="1"/>
<evidence type="ECO:0000250" key="2">
    <source>
        <dbReference type="UniProtKB" id="Q6JEL3"/>
    </source>
</evidence>
<evidence type="ECO:0000255" key="3">
    <source>
        <dbReference type="PROSITE-ProRule" id="PRU00037"/>
    </source>
</evidence>
<evidence type="ECO:0000269" key="4">
    <source>
    </source>
</evidence>
<evidence type="ECO:0000269" key="5">
    <source>
    </source>
</evidence>
<evidence type="ECO:0000305" key="6"/>
<evidence type="ECO:0000305" key="7">
    <source>
    </source>
</evidence>
<organism>
    <name type="scientific">Mus musculus</name>
    <name type="common">Mouse</name>
    <dbReference type="NCBI Taxonomy" id="10090"/>
    <lineage>
        <taxon>Eukaryota</taxon>
        <taxon>Metazoa</taxon>
        <taxon>Chordata</taxon>
        <taxon>Craniata</taxon>
        <taxon>Vertebrata</taxon>
        <taxon>Euteleostomi</taxon>
        <taxon>Mammalia</taxon>
        <taxon>Eutheria</taxon>
        <taxon>Euarchontoglires</taxon>
        <taxon>Glires</taxon>
        <taxon>Rodentia</taxon>
        <taxon>Myomorpha</taxon>
        <taxon>Muroidea</taxon>
        <taxon>Muridae</taxon>
        <taxon>Murinae</taxon>
        <taxon>Mus</taxon>
        <taxon>Mus</taxon>
    </lineage>
</organism>
<protein>
    <recommendedName>
        <fullName>Kelch-like protein 10</fullName>
    </recommendedName>
</protein>
<feature type="chain" id="PRO_0000119113" description="Kelch-like protein 10">
    <location>
        <begin position="1"/>
        <end position="608"/>
    </location>
</feature>
<feature type="domain" description="BTB" evidence="3">
    <location>
        <begin position="39"/>
        <end position="106"/>
    </location>
</feature>
<feature type="repeat" description="Kelch 1">
    <location>
        <begin position="292"/>
        <end position="339"/>
    </location>
</feature>
<feature type="repeat" description="Kelch 2">
    <location>
        <begin position="340"/>
        <end position="386"/>
    </location>
</feature>
<feature type="repeat" description="Kelch 3">
    <location>
        <begin position="388"/>
        <end position="433"/>
    </location>
</feature>
<feature type="repeat" description="Kelch 4">
    <location>
        <begin position="434"/>
        <end position="480"/>
    </location>
</feature>
<feature type="repeat" description="Kelch 5">
    <location>
        <begin position="481"/>
        <end position="527"/>
    </location>
</feature>
<feature type="repeat" description="Kelch 6">
    <location>
        <begin position="529"/>
        <end position="574"/>
    </location>
</feature>
<feature type="modified residue" description="Phosphoserine" evidence="2">
    <location>
        <position position="501"/>
    </location>
</feature>
<feature type="sequence conflict" description="In Ref. 2; BAC36680." evidence="6" ref="2">
    <original>K</original>
    <variation>T</variation>
    <location>
        <position position="159"/>
    </location>
</feature>
<feature type="sequence conflict" description="In Ref. 2; BAB24507." evidence="6" ref="2">
    <original>D</original>
    <variation>N</variation>
    <location>
        <position position="251"/>
    </location>
</feature>
<comment type="function">
    <text evidence="4 5">May be a substrate-specific adapter of a CUL3-based E3 ubiquitin-protein ligase complex which mediates the ubiquitination and subsequent proteasomal degradation of target proteins during spermatogenesis. Required for male fertility.</text>
</comment>
<comment type="pathway">
    <text>Protein modification; protein ubiquitination.</text>
</comment>
<comment type="subunit">
    <text evidence="1 5">Self-associates (By similarity). Interacts with CUL3; indicative for the participation in an E3 ubiquitin ligase complex.</text>
</comment>
<comment type="subcellular location">
    <subcellularLocation>
        <location evidence="4">Cytoplasm</location>
    </subcellularLocation>
</comment>
<comment type="tissue specificity">
    <text evidence="4">Testis specific.</text>
</comment>
<comment type="developmental stage">
    <text evidence="4">Expressed in elongating and elongated spermatids (steps 9-16).</text>
</comment>
<comment type="disruption phenotype">
    <text evidence="4">Heterozygous males are completely infertile because of disrupted spermiogenesis characterized by asynchronous spermatid maturation, degeneration of late spermatids, sloughing of postmeiotic germ cells from the seminiferous epithelium, and marked reduction in the numbers of late spermatids.</text>
</comment>
<comment type="miscellaneous">
    <text evidence="7">Does not seem to associate with actin.</text>
</comment>
<dbReference type="EMBL" id="AY495337">
    <property type="protein sequence ID" value="AAS91790.1"/>
    <property type="molecule type" value="mRNA"/>
</dbReference>
<dbReference type="EMBL" id="AK006288">
    <property type="protein sequence ID" value="BAB24507.1"/>
    <property type="molecule type" value="mRNA"/>
</dbReference>
<dbReference type="EMBL" id="AK014906">
    <property type="protein sequence ID" value="BAB29614.1"/>
    <property type="molecule type" value="mRNA"/>
</dbReference>
<dbReference type="EMBL" id="AK077202">
    <property type="protein sequence ID" value="BAC36680.1"/>
    <property type="molecule type" value="mRNA"/>
</dbReference>
<dbReference type="CCDS" id="CCDS25423.1"/>
<dbReference type="RefSeq" id="NP_080003.1">
    <property type="nucleotide sequence ID" value="NM_025727.4"/>
</dbReference>
<dbReference type="SMR" id="Q9D5V2"/>
<dbReference type="BioGRID" id="211671">
    <property type="interactions" value="1"/>
</dbReference>
<dbReference type="FunCoup" id="Q9D5V2">
    <property type="interactions" value="319"/>
</dbReference>
<dbReference type="STRING" id="10090.ENSMUSP00000001599"/>
<dbReference type="PhosphoSitePlus" id="Q9D5V2"/>
<dbReference type="PaxDb" id="10090-ENSMUSP00000001599"/>
<dbReference type="ProteomicsDB" id="263650"/>
<dbReference type="Antibodypedia" id="29004">
    <property type="antibodies" value="48 antibodies from 11 providers"/>
</dbReference>
<dbReference type="DNASU" id="66720"/>
<dbReference type="Ensembl" id="ENSMUST00000001599.4">
    <property type="protein sequence ID" value="ENSMUSP00000001599.4"/>
    <property type="gene ID" value="ENSMUSG00000001558.6"/>
</dbReference>
<dbReference type="GeneID" id="66720"/>
<dbReference type="KEGG" id="mmu:66720"/>
<dbReference type="UCSC" id="uc007lli.1">
    <property type="organism name" value="mouse"/>
</dbReference>
<dbReference type="AGR" id="MGI:2181067"/>
<dbReference type="CTD" id="317719"/>
<dbReference type="MGI" id="MGI:2181067">
    <property type="gene designation" value="Klhl10"/>
</dbReference>
<dbReference type="VEuPathDB" id="HostDB:ENSMUSG00000001558"/>
<dbReference type="eggNOG" id="KOG4441">
    <property type="taxonomic scope" value="Eukaryota"/>
</dbReference>
<dbReference type="GeneTree" id="ENSGT00940000154664"/>
<dbReference type="HOGENOM" id="CLU_004253_14_1_1"/>
<dbReference type="InParanoid" id="Q9D5V2"/>
<dbReference type="OMA" id="YKTNQWS"/>
<dbReference type="OrthoDB" id="191037at2759"/>
<dbReference type="PhylomeDB" id="Q9D5V2"/>
<dbReference type="TreeFam" id="TF329218"/>
<dbReference type="UniPathway" id="UPA00143"/>
<dbReference type="BioGRID-ORCS" id="66720">
    <property type="hits" value="1 hit in 78 CRISPR screens"/>
</dbReference>
<dbReference type="ChiTaRS" id="Klhl10">
    <property type="organism name" value="mouse"/>
</dbReference>
<dbReference type="PRO" id="PR:Q9D5V2"/>
<dbReference type="Proteomes" id="UP000000589">
    <property type="component" value="Chromosome 11"/>
</dbReference>
<dbReference type="RNAct" id="Q9D5V2">
    <property type="molecule type" value="protein"/>
</dbReference>
<dbReference type="Bgee" id="ENSMUSG00000001558">
    <property type="expression patterns" value="Expressed in seminiferous tubule of testis and 43 other cell types or tissues"/>
</dbReference>
<dbReference type="ExpressionAtlas" id="Q9D5V2">
    <property type="expression patterns" value="baseline and differential"/>
</dbReference>
<dbReference type="GO" id="GO:0005737">
    <property type="term" value="C:cytoplasm"/>
    <property type="evidence" value="ECO:0000314"/>
    <property type="project" value="MGI"/>
</dbReference>
<dbReference type="GO" id="GO:0000902">
    <property type="term" value="P:cell morphogenesis"/>
    <property type="evidence" value="ECO:0000315"/>
    <property type="project" value="MGI"/>
</dbReference>
<dbReference type="GO" id="GO:0009566">
    <property type="term" value="P:fertilization"/>
    <property type="evidence" value="ECO:0000315"/>
    <property type="project" value="MGI"/>
</dbReference>
<dbReference type="GO" id="GO:0048873">
    <property type="term" value="P:homeostasis of number of cells within a tissue"/>
    <property type="evidence" value="ECO:0000315"/>
    <property type="project" value="MGI"/>
</dbReference>
<dbReference type="GO" id="GO:0048808">
    <property type="term" value="P:male genitalia morphogenesis"/>
    <property type="evidence" value="ECO:0000315"/>
    <property type="project" value="MGI"/>
</dbReference>
<dbReference type="GO" id="GO:0008584">
    <property type="term" value="P:male gonad development"/>
    <property type="evidence" value="ECO:0000315"/>
    <property type="project" value="MGI"/>
</dbReference>
<dbReference type="GO" id="GO:0016567">
    <property type="term" value="P:protein ubiquitination"/>
    <property type="evidence" value="ECO:0007669"/>
    <property type="project" value="UniProtKB-UniPathway"/>
</dbReference>
<dbReference type="GO" id="GO:0007286">
    <property type="term" value="P:spermatid development"/>
    <property type="evidence" value="ECO:0000315"/>
    <property type="project" value="MGI"/>
</dbReference>
<dbReference type="CDD" id="cd18450">
    <property type="entry name" value="BACK_KLHL10"/>
    <property type="match status" value="1"/>
</dbReference>
<dbReference type="CDD" id="cd18240">
    <property type="entry name" value="BTB_POZ_KLHL10"/>
    <property type="match status" value="1"/>
</dbReference>
<dbReference type="FunFam" id="1.25.40.420:FF:000001">
    <property type="entry name" value="Kelch-like family member 12"/>
    <property type="match status" value="1"/>
</dbReference>
<dbReference type="FunFam" id="3.30.710.10:FF:000101">
    <property type="entry name" value="kelch-like protein 10 isoform X1"/>
    <property type="match status" value="1"/>
</dbReference>
<dbReference type="FunFam" id="2.120.10.80:FF:000041">
    <property type="entry name" value="kelch-like protein 10 isoform X2"/>
    <property type="match status" value="1"/>
</dbReference>
<dbReference type="Gene3D" id="1.25.40.420">
    <property type="match status" value="1"/>
</dbReference>
<dbReference type="Gene3D" id="2.120.10.80">
    <property type="entry name" value="Kelch-type beta propeller"/>
    <property type="match status" value="1"/>
</dbReference>
<dbReference type="Gene3D" id="3.30.710.10">
    <property type="entry name" value="Potassium Channel Kv1.1, Chain A"/>
    <property type="match status" value="1"/>
</dbReference>
<dbReference type="InterPro" id="IPR011705">
    <property type="entry name" value="BACK"/>
</dbReference>
<dbReference type="InterPro" id="IPR056737">
    <property type="entry name" value="Beta-prop_ATRN-MKLN-like"/>
</dbReference>
<dbReference type="InterPro" id="IPR017096">
    <property type="entry name" value="BTB-kelch_protein"/>
</dbReference>
<dbReference type="InterPro" id="IPR000210">
    <property type="entry name" value="BTB/POZ_dom"/>
</dbReference>
<dbReference type="InterPro" id="IPR015915">
    <property type="entry name" value="Kelch-typ_b-propeller"/>
</dbReference>
<dbReference type="InterPro" id="IPR006652">
    <property type="entry name" value="Kelch_1"/>
</dbReference>
<dbReference type="InterPro" id="IPR030608">
    <property type="entry name" value="KLHL10_BTB/POZ"/>
</dbReference>
<dbReference type="InterPro" id="IPR011333">
    <property type="entry name" value="SKP1/BTB/POZ_sf"/>
</dbReference>
<dbReference type="PANTHER" id="PTHR45632:SF17">
    <property type="entry name" value="KELCH-LIKE PROTEIN 31"/>
    <property type="match status" value="1"/>
</dbReference>
<dbReference type="PANTHER" id="PTHR45632">
    <property type="entry name" value="LD33804P"/>
    <property type="match status" value="1"/>
</dbReference>
<dbReference type="Pfam" id="PF07707">
    <property type="entry name" value="BACK"/>
    <property type="match status" value="1"/>
</dbReference>
<dbReference type="Pfam" id="PF24981">
    <property type="entry name" value="Beta-prop_ATRN-LZTR1"/>
    <property type="match status" value="1"/>
</dbReference>
<dbReference type="Pfam" id="PF00651">
    <property type="entry name" value="BTB"/>
    <property type="match status" value="1"/>
</dbReference>
<dbReference type="Pfam" id="PF01344">
    <property type="entry name" value="Kelch_1"/>
    <property type="match status" value="1"/>
</dbReference>
<dbReference type="PIRSF" id="PIRSF037037">
    <property type="entry name" value="Kelch-like_protein_gigaxonin"/>
    <property type="match status" value="1"/>
</dbReference>
<dbReference type="PRINTS" id="PR00501">
    <property type="entry name" value="KELCHREPEAT"/>
</dbReference>
<dbReference type="SMART" id="SM00875">
    <property type="entry name" value="BACK"/>
    <property type="match status" value="1"/>
</dbReference>
<dbReference type="SMART" id="SM00225">
    <property type="entry name" value="BTB"/>
    <property type="match status" value="1"/>
</dbReference>
<dbReference type="SMART" id="SM00612">
    <property type="entry name" value="Kelch"/>
    <property type="match status" value="6"/>
</dbReference>
<dbReference type="SUPFAM" id="SSF117281">
    <property type="entry name" value="Kelch motif"/>
    <property type="match status" value="1"/>
</dbReference>
<dbReference type="SUPFAM" id="SSF54695">
    <property type="entry name" value="POZ domain"/>
    <property type="match status" value="1"/>
</dbReference>
<dbReference type="PROSITE" id="PS50097">
    <property type="entry name" value="BTB"/>
    <property type="match status" value="1"/>
</dbReference>
<keyword id="KW-0963">Cytoplasm</keyword>
<keyword id="KW-0221">Differentiation</keyword>
<keyword id="KW-0880">Kelch repeat</keyword>
<keyword id="KW-0597">Phosphoprotein</keyword>
<keyword id="KW-1185">Reference proteome</keyword>
<keyword id="KW-0677">Repeat</keyword>
<keyword id="KW-0744">Spermatogenesis</keyword>
<keyword id="KW-0833">Ubl conjugation pathway</keyword>
<reference key="1">
    <citation type="journal article" date="2004" name="Proc. Natl. Acad. Sci. U.S.A.">
        <title>Haploinsufficiency of kelch-like protein homolog 10 causes infertility in male mice.</title>
        <authorList>
            <person name="Yan W."/>
            <person name="Ma L."/>
            <person name="Burns K.H."/>
            <person name="Matzuk M.M."/>
        </authorList>
    </citation>
    <scope>NUCLEOTIDE SEQUENCE [MRNA]</scope>
    <scope>FUNCTION</scope>
    <scope>SUBCELLULAR LOCATION</scope>
    <scope>DEVELOPMENTAL STAGE</scope>
    <scope>TISSUE SPECIFICITY</scope>
    <scope>DISRUPTION PHENOTYPE</scope>
    <source>
        <strain>C57BL/6J</strain>
        <tissue>Testis</tissue>
    </source>
</reference>
<reference key="2">
    <citation type="journal article" date="2005" name="Science">
        <title>The transcriptional landscape of the mammalian genome.</title>
        <authorList>
            <person name="Carninci P."/>
            <person name="Kasukawa T."/>
            <person name="Katayama S."/>
            <person name="Gough J."/>
            <person name="Frith M.C."/>
            <person name="Maeda N."/>
            <person name="Oyama R."/>
            <person name="Ravasi T."/>
            <person name="Lenhard B."/>
            <person name="Wells C."/>
            <person name="Kodzius R."/>
            <person name="Shimokawa K."/>
            <person name="Bajic V.B."/>
            <person name="Brenner S.E."/>
            <person name="Batalov S."/>
            <person name="Forrest A.R."/>
            <person name="Zavolan M."/>
            <person name="Davis M.J."/>
            <person name="Wilming L.G."/>
            <person name="Aidinis V."/>
            <person name="Allen J.E."/>
            <person name="Ambesi-Impiombato A."/>
            <person name="Apweiler R."/>
            <person name="Aturaliya R.N."/>
            <person name="Bailey T.L."/>
            <person name="Bansal M."/>
            <person name="Baxter L."/>
            <person name="Beisel K.W."/>
            <person name="Bersano T."/>
            <person name="Bono H."/>
            <person name="Chalk A.M."/>
            <person name="Chiu K.P."/>
            <person name="Choudhary V."/>
            <person name="Christoffels A."/>
            <person name="Clutterbuck D.R."/>
            <person name="Crowe M.L."/>
            <person name="Dalla E."/>
            <person name="Dalrymple B.P."/>
            <person name="de Bono B."/>
            <person name="Della Gatta G."/>
            <person name="di Bernardo D."/>
            <person name="Down T."/>
            <person name="Engstrom P."/>
            <person name="Fagiolini M."/>
            <person name="Faulkner G."/>
            <person name="Fletcher C.F."/>
            <person name="Fukushima T."/>
            <person name="Furuno M."/>
            <person name="Futaki S."/>
            <person name="Gariboldi M."/>
            <person name="Georgii-Hemming P."/>
            <person name="Gingeras T.R."/>
            <person name="Gojobori T."/>
            <person name="Green R.E."/>
            <person name="Gustincich S."/>
            <person name="Harbers M."/>
            <person name="Hayashi Y."/>
            <person name="Hensch T.K."/>
            <person name="Hirokawa N."/>
            <person name="Hill D."/>
            <person name="Huminiecki L."/>
            <person name="Iacono M."/>
            <person name="Ikeo K."/>
            <person name="Iwama A."/>
            <person name="Ishikawa T."/>
            <person name="Jakt M."/>
            <person name="Kanapin A."/>
            <person name="Katoh M."/>
            <person name="Kawasawa Y."/>
            <person name="Kelso J."/>
            <person name="Kitamura H."/>
            <person name="Kitano H."/>
            <person name="Kollias G."/>
            <person name="Krishnan S.P."/>
            <person name="Kruger A."/>
            <person name="Kummerfeld S.K."/>
            <person name="Kurochkin I.V."/>
            <person name="Lareau L.F."/>
            <person name="Lazarevic D."/>
            <person name="Lipovich L."/>
            <person name="Liu J."/>
            <person name="Liuni S."/>
            <person name="McWilliam S."/>
            <person name="Madan Babu M."/>
            <person name="Madera M."/>
            <person name="Marchionni L."/>
            <person name="Matsuda H."/>
            <person name="Matsuzawa S."/>
            <person name="Miki H."/>
            <person name="Mignone F."/>
            <person name="Miyake S."/>
            <person name="Morris K."/>
            <person name="Mottagui-Tabar S."/>
            <person name="Mulder N."/>
            <person name="Nakano N."/>
            <person name="Nakauchi H."/>
            <person name="Ng P."/>
            <person name="Nilsson R."/>
            <person name="Nishiguchi S."/>
            <person name="Nishikawa S."/>
            <person name="Nori F."/>
            <person name="Ohara O."/>
            <person name="Okazaki Y."/>
            <person name="Orlando V."/>
            <person name="Pang K.C."/>
            <person name="Pavan W.J."/>
            <person name="Pavesi G."/>
            <person name="Pesole G."/>
            <person name="Petrovsky N."/>
            <person name="Piazza S."/>
            <person name="Reed J."/>
            <person name="Reid J.F."/>
            <person name="Ring B.Z."/>
            <person name="Ringwald M."/>
            <person name="Rost B."/>
            <person name="Ruan Y."/>
            <person name="Salzberg S.L."/>
            <person name="Sandelin A."/>
            <person name="Schneider C."/>
            <person name="Schoenbach C."/>
            <person name="Sekiguchi K."/>
            <person name="Semple C.A."/>
            <person name="Seno S."/>
            <person name="Sessa L."/>
            <person name="Sheng Y."/>
            <person name="Shibata Y."/>
            <person name="Shimada H."/>
            <person name="Shimada K."/>
            <person name="Silva D."/>
            <person name="Sinclair B."/>
            <person name="Sperling S."/>
            <person name="Stupka E."/>
            <person name="Sugiura K."/>
            <person name="Sultana R."/>
            <person name="Takenaka Y."/>
            <person name="Taki K."/>
            <person name="Tammoja K."/>
            <person name="Tan S.L."/>
            <person name="Tang S."/>
            <person name="Taylor M.S."/>
            <person name="Tegner J."/>
            <person name="Teichmann S.A."/>
            <person name="Ueda H.R."/>
            <person name="van Nimwegen E."/>
            <person name="Verardo R."/>
            <person name="Wei C.L."/>
            <person name="Yagi K."/>
            <person name="Yamanishi H."/>
            <person name="Zabarovsky E."/>
            <person name="Zhu S."/>
            <person name="Zimmer A."/>
            <person name="Hide W."/>
            <person name="Bult C."/>
            <person name="Grimmond S.M."/>
            <person name="Teasdale R.D."/>
            <person name="Liu E.T."/>
            <person name="Brusic V."/>
            <person name="Quackenbush J."/>
            <person name="Wahlestedt C."/>
            <person name="Mattick J.S."/>
            <person name="Hume D.A."/>
            <person name="Kai C."/>
            <person name="Sasaki D."/>
            <person name="Tomaru Y."/>
            <person name="Fukuda S."/>
            <person name="Kanamori-Katayama M."/>
            <person name="Suzuki M."/>
            <person name="Aoki J."/>
            <person name="Arakawa T."/>
            <person name="Iida J."/>
            <person name="Imamura K."/>
            <person name="Itoh M."/>
            <person name="Kato T."/>
            <person name="Kawaji H."/>
            <person name="Kawagashira N."/>
            <person name="Kawashima T."/>
            <person name="Kojima M."/>
            <person name="Kondo S."/>
            <person name="Konno H."/>
            <person name="Nakano K."/>
            <person name="Ninomiya N."/>
            <person name="Nishio T."/>
            <person name="Okada M."/>
            <person name="Plessy C."/>
            <person name="Shibata K."/>
            <person name="Shiraki T."/>
            <person name="Suzuki S."/>
            <person name="Tagami M."/>
            <person name="Waki K."/>
            <person name="Watahiki A."/>
            <person name="Okamura-Oho Y."/>
            <person name="Suzuki H."/>
            <person name="Kawai J."/>
            <person name="Hayashizaki Y."/>
        </authorList>
    </citation>
    <scope>NUCLEOTIDE SEQUENCE [LARGE SCALE MRNA]</scope>
    <source>
        <strain>C57BL/6J</strain>
        <tissue>Testis</tissue>
    </source>
</reference>
<reference key="3">
    <citation type="journal article" date="2006" name="Biol. Reprod.">
        <title>Cullin3 is a KLHL10-interacting protein preferentially expressed during late spermiogenesis.</title>
        <authorList>
            <person name="Wang S."/>
            <person name="Zheng H."/>
            <person name="Esaki Y."/>
            <person name="Kelly F."/>
            <person name="Yan W."/>
        </authorList>
    </citation>
    <scope>FUNCTION</scope>
    <scope>INTERACTION WITH CUL3</scope>
</reference>
<reference key="4">
    <citation type="journal article" date="2010" name="Cell">
        <title>A tissue-specific atlas of mouse protein phosphorylation and expression.</title>
        <authorList>
            <person name="Huttlin E.L."/>
            <person name="Jedrychowski M.P."/>
            <person name="Elias J.E."/>
            <person name="Goswami T."/>
            <person name="Rad R."/>
            <person name="Beausoleil S.A."/>
            <person name="Villen J."/>
            <person name="Haas W."/>
            <person name="Sowa M.E."/>
            <person name="Gygi S.P."/>
        </authorList>
    </citation>
    <scope>IDENTIFICATION BY MASS SPECTROMETRY [LARGE SCALE ANALYSIS]</scope>
    <source>
        <tissue>Testis</tissue>
    </source>
</reference>
<accession>Q9D5V2</accession>
<accession>Q8BVM3</accession>
<accession>Q9DA07</accession>
<sequence>MEMESTAASTRFHQPHMERKMSAMTCEIFNELRLEGKLCDVVIKVNGFEFNAHKNILCSCSSYFRALFTSGWNNTEKKVYNIPGISPDMMKLIIEYAYTRTVPITPDNVEKLLAAADQFNIMGIVRGCCEFLKSELCLDNCIGICKFTDYYYCPELRQKAYMFILHNFEEMVKVSAEFLELSVTELKDIIEKDELNVKQEDAVFEAILKWISHDPQNRKQHISVLLPKVRLALMHAEYFMNNVKMNDYVKDSEECKPVIINALKAMYDLNMNGPSNSDFTNPLTRPRLPYAILFAIGGWSGGSPTNAIEAYDARADRWVNVTCEEESPRAYHGAAYLKGYVYIIGGFDSVDYFNSVKRFDPVKKTWHQVAPMHSRRCYVSVTVLSNFIYAMGGFDGYVRLNTAERYEPETNQWTLIAPMHEQRSDASATTLYGKVYICGGFNGNECLFTAEVYNTESNQWTVIAPMRSRRSGIGVIAYGEHVYAVGGFDGANRLRSAEAYSPVANTWRTIPTMFNPRSNFGIEVVDDLLFVVGGFNGFTTTFNVECYDEKTDEWYDAHDMSIYRSALSCCVVPGLANVGEYAARRDNFTGLALRDEVKYSASTSTLPV</sequence>
<proteinExistence type="evidence at protein level"/>
<gene>
    <name type="primary">Klhl10</name>
</gene>